<dbReference type="EC" id="3.6.5.-" evidence="2"/>
<dbReference type="EMBL" id="AB222119">
    <property type="protein sequence ID" value="BAF62364.1"/>
    <property type="molecule type" value="mRNA"/>
</dbReference>
<dbReference type="RefSeq" id="NP_001092014.1">
    <property type="nucleotide sequence ID" value="NM_001098544.1"/>
</dbReference>
<dbReference type="SMR" id="A5A6J1"/>
<dbReference type="FunCoup" id="A5A6J1">
    <property type="interactions" value="2427"/>
</dbReference>
<dbReference type="STRING" id="9598.ENSPTRP00000008374"/>
<dbReference type="PaxDb" id="9598-ENSPTRP00000008374"/>
<dbReference type="Ensembl" id="ENSPTRT00000009064.3">
    <property type="protein sequence ID" value="ENSPTRP00000008374.2"/>
    <property type="gene ID" value="ENSPTRG00000004901.5"/>
</dbReference>
<dbReference type="GeneID" id="451875"/>
<dbReference type="KEGG" id="ptr:451875"/>
<dbReference type="CTD" id="7846"/>
<dbReference type="VGNC" id="VGNC:13486">
    <property type="gene designation" value="TUBA1A"/>
</dbReference>
<dbReference type="eggNOG" id="KOG1376">
    <property type="taxonomic scope" value="Eukaryota"/>
</dbReference>
<dbReference type="GeneTree" id="ENSGT00950000182825"/>
<dbReference type="HOGENOM" id="CLU_015718_0_0_1"/>
<dbReference type="InParanoid" id="A5A6J1"/>
<dbReference type="OMA" id="WARTRNT"/>
<dbReference type="OrthoDB" id="5086at9604"/>
<dbReference type="TreeFam" id="TF300314"/>
<dbReference type="Proteomes" id="UP000002277">
    <property type="component" value="Chromosome 12"/>
</dbReference>
<dbReference type="Bgee" id="ENSPTRG00000004901">
    <property type="expression patterns" value="Expressed in dorsolateral prefrontal cortex and 21 other cell types or tissues"/>
</dbReference>
<dbReference type="GO" id="GO:0005879">
    <property type="term" value="C:axonemal microtubule"/>
    <property type="evidence" value="ECO:0007669"/>
    <property type="project" value="Ensembl"/>
</dbReference>
<dbReference type="GO" id="GO:0000793">
    <property type="term" value="C:condensed chromosome"/>
    <property type="evidence" value="ECO:0007669"/>
    <property type="project" value="Ensembl"/>
</dbReference>
<dbReference type="GO" id="GO:0005737">
    <property type="term" value="C:cytoplasm"/>
    <property type="evidence" value="ECO:0000318"/>
    <property type="project" value="GO_Central"/>
</dbReference>
<dbReference type="GO" id="GO:0036464">
    <property type="term" value="C:cytoplasmic ribonucleoprotein granule"/>
    <property type="evidence" value="ECO:0007669"/>
    <property type="project" value="Ensembl"/>
</dbReference>
<dbReference type="GO" id="GO:0005829">
    <property type="term" value="C:cytosol"/>
    <property type="evidence" value="ECO:0007669"/>
    <property type="project" value="Ensembl"/>
</dbReference>
<dbReference type="GO" id="GO:0005874">
    <property type="term" value="C:microtubule"/>
    <property type="evidence" value="ECO:0000318"/>
    <property type="project" value="GO_Central"/>
</dbReference>
<dbReference type="GO" id="GO:0031594">
    <property type="term" value="C:neuromuscular junction"/>
    <property type="evidence" value="ECO:0007669"/>
    <property type="project" value="Ensembl"/>
</dbReference>
<dbReference type="GO" id="GO:0005886">
    <property type="term" value="C:plasma membrane"/>
    <property type="evidence" value="ECO:0007669"/>
    <property type="project" value="Ensembl"/>
</dbReference>
<dbReference type="GO" id="GO:0055037">
    <property type="term" value="C:recycling endosome"/>
    <property type="evidence" value="ECO:0007669"/>
    <property type="project" value="Ensembl"/>
</dbReference>
<dbReference type="GO" id="GO:0036126">
    <property type="term" value="C:sperm flagellum"/>
    <property type="evidence" value="ECO:0007669"/>
    <property type="project" value="Ensembl"/>
</dbReference>
<dbReference type="GO" id="GO:0005525">
    <property type="term" value="F:GTP binding"/>
    <property type="evidence" value="ECO:0000318"/>
    <property type="project" value="GO_Central"/>
</dbReference>
<dbReference type="GO" id="GO:0016787">
    <property type="term" value="F:hydrolase activity"/>
    <property type="evidence" value="ECO:0007669"/>
    <property type="project" value="UniProtKB-KW"/>
</dbReference>
<dbReference type="GO" id="GO:0042802">
    <property type="term" value="F:identical protein binding"/>
    <property type="evidence" value="ECO:0007669"/>
    <property type="project" value="Ensembl"/>
</dbReference>
<dbReference type="GO" id="GO:0046872">
    <property type="term" value="F:metal ion binding"/>
    <property type="evidence" value="ECO:0007669"/>
    <property type="project" value="UniProtKB-KW"/>
</dbReference>
<dbReference type="GO" id="GO:0046982">
    <property type="term" value="F:protein heterodimerization activity"/>
    <property type="evidence" value="ECO:0007669"/>
    <property type="project" value="Ensembl"/>
</dbReference>
<dbReference type="GO" id="GO:0044877">
    <property type="term" value="F:protein-containing complex binding"/>
    <property type="evidence" value="ECO:0007669"/>
    <property type="project" value="Ensembl"/>
</dbReference>
<dbReference type="GO" id="GO:0005200">
    <property type="term" value="F:structural constituent of cytoskeleton"/>
    <property type="evidence" value="ECO:0000318"/>
    <property type="project" value="GO_Central"/>
</dbReference>
<dbReference type="GO" id="GO:0008344">
    <property type="term" value="P:adult locomotory behavior"/>
    <property type="evidence" value="ECO:0007669"/>
    <property type="project" value="Ensembl"/>
</dbReference>
<dbReference type="GO" id="GO:0071277">
    <property type="term" value="P:cellular response to calcium ion"/>
    <property type="evidence" value="ECO:0007669"/>
    <property type="project" value="Ensembl"/>
</dbReference>
<dbReference type="GO" id="GO:0007098">
    <property type="term" value="P:centrosome cycle"/>
    <property type="evidence" value="ECO:0007669"/>
    <property type="project" value="Ensembl"/>
</dbReference>
<dbReference type="GO" id="GO:0021696">
    <property type="term" value="P:cerebellar cortex morphogenesis"/>
    <property type="evidence" value="ECO:0007669"/>
    <property type="project" value="Ensembl"/>
</dbReference>
<dbReference type="GO" id="GO:0021987">
    <property type="term" value="P:cerebral cortex development"/>
    <property type="evidence" value="ECO:0007669"/>
    <property type="project" value="Ensembl"/>
</dbReference>
<dbReference type="GO" id="GO:0021542">
    <property type="term" value="P:dentate gyrus development"/>
    <property type="evidence" value="ECO:0007669"/>
    <property type="project" value="Ensembl"/>
</dbReference>
<dbReference type="GO" id="GO:0030317">
    <property type="term" value="P:flagellated sperm motility"/>
    <property type="evidence" value="ECO:0007669"/>
    <property type="project" value="Ensembl"/>
</dbReference>
<dbReference type="GO" id="GO:0048853">
    <property type="term" value="P:forebrain morphogenesis"/>
    <property type="evidence" value="ECO:0007669"/>
    <property type="project" value="Ensembl"/>
</dbReference>
<dbReference type="GO" id="GO:0010467">
    <property type="term" value="P:gene expression"/>
    <property type="evidence" value="ECO:0007669"/>
    <property type="project" value="Ensembl"/>
</dbReference>
<dbReference type="GO" id="GO:0010001">
    <property type="term" value="P:glial cell differentiation"/>
    <property type="evidence" value="ECO:0007669"/>
    <property type="project" value="Ensembl"/>
</dbReference>
<dbReference type="GO" id="GO:0048873">
    <property type="term" value="P:homeostasis of number of cells within a tissue"/>
    <property type="evidence" value="ECO:0007669"/>
    <property type="project" value="Ensembl"/>
</dbReference>
<dbReference type="GO" id="GO:0006886">
    <property type="term" value="P:intracellular protein transport"/>
    <property type="evidence" value="ECO:0007669"/>
    <property type="project" value="Ensembl"/>
</dbReference>
<dbReference type="GO" id="GO:0035641">
    <property type="term" value="P:locomotory exploration behavior"/>
    <property type="evidence" value="ECO:0007669"/>
    <property type="project" value="Ensembl"/>
</dbReference>
<dbReference type="GO" id="GO:0007613">
    <property type="term" value="P:memory"/>
    <property type="evidence" value="ECO:0007669"/>
    <property type="project" value="Ensembl"/>
</dbReference>
<dbReference type="GO" id="GO:0000226">
    <property type="term" value="P:microtubule cytoskeleton organization"/>
    <property type="evidence" value="ECO:0000318"/>
    <property type="project" value="GO_Central"/>
</dbReference>
<dbReference type="GO" id="GO:0046785">
    <property type="term" value="P:microtubule polymerization"/>
    <property type="evidence" value="ECO:0007669"/>
    <property type="project" value="Ensembl"/>
</dbReference>
<dbReference type="GO" id="GO:0000278">
    <property type="term" value="P:mitotic cell cycle"/>
    <property type="evidence" value="ECO:0000318"/>
    <property type="project" value="GO_Central"/>
</dbReference>
<dbReference type="GO" id="GO:0061744">
    <property type="term" value="P:motor behavior"/>
    <property type="evidence" value="ECO:0007669"/>
    <property type="project" value="Ensembl"/>
</dbReference>
<dbReference type="GO" id="GO:0051402">
    <property type="term" value="P:neuron apoptotic process"/>
    <property type="evidence" value="ECO:0007669"/>
    <property type="project" value="Ensembl"/>
</dbReference>
<dbReference type="GO" id="GO:0001764">
    <property type="term" value="P:neuron migration"/>
    <property type="evidence" value="ECO:0007669"/>
    <property type="project" value="Ensembl"/>
</dbReference>
<dbReference type="GO" id="GO:0140058">
    <property type="term" value="P:neuron projection arborization"/>
    <property type="evidence" value="ECO:0007669"/>
    <property type="project" value="Ensembl"/>
</dbReference>
<dbReference type="GO" id="GO:0072384">
    <property type="term" value="P:organelle transport along microtubule"/>
    <property type="evidence" value="ECO:0007669"/>
    <property type="project" value="Ensembl"/>
</dbReference>
<dbReference type="GO" id="GO:0021859">
    <property type="term" value="P:pyramidal neuron differentiation"/>
    <property type="evidence" value="ECO:0007669"/>
    <property type="project" value="Ensembl"/>
</dbReference>
<dbReference type="GO" id="GO:0050807">
    <property type="term" value="P:regulation of synapse organization"/>
    <property type="evidence" value="ECO:0007669"/>
    <property type="project" value="Ensembl"/>
</dbReference>
<dbReference type="GO" id="GO:1902065">
    <property type="term" value="P:response to L-glutamate"/>
    <property type="evidence" value="ECO:0007669"/>
    <property type="project" value="Ensembl"/>
</dbReference>
<dbReference type="GO" id="GO:0009612">
    <property type="term" value="P:response to mechanical stimulus"/>
    <property type="evidence" value="ECO:0007669"/>
    <property type="project" value="Ensembl"/>
</dbReference>
<dbReference type="GO" id="GO:0034612">
    <property type="term" value="P:response to tumor necrosis factor"/>
    <property type="evidence" value="ECO:0007669"/>
    <property type="project" value="Ensembl"/>
</dbReference>
<dbReference type="GO" id="GO:0007224">
    <property type="term" value="P:smoothened signaling pathway"/>
    <property type="evidence" value="ECO:0007669"/>
    <property type="project" value="Ensembl"/>
</dbReference>
<dbReference type="GO" id="GO:0001964">
    <property type="term" value="P:startle response"/>
    <property type="evidence" value="ECO:0007669"/>
    <property type="project" value="Ensembl"/>
</dbReference>
<dbReference type="GO" id="GO:0050808">
    <property type="term" value="P:synapse organization"/>
    <property type="evidence" value="ECO:0007669"/>
    <property type="project" value="Ensembl"/>
</dbReference>
<dbReference type="GO" id="GO:0008542">
    <property type="term" value="P:visual learning"/>
    <property type="evidence" value="ECO:0007669"/>
    <property type="project" value="Ensembl"/>
</dbReference>
<dbReference type="CDD" id="cd02186">
    <property type="entry name" value="alpha_tubulin"/>
    <property type="match status" value="1"/>
</dbReference>
<dbReference type="FunFam" id="1.10.287.600:FF:000005">
    <property type="entry name" value="Tubulin alpha chain"/>
    <property type="match status" value="1"/>
</dbReference>
<dbReference type="FunFam" id="3.30.1330.20:FF:000001">
    <property type="entry name" value="Tubulin alpha chain"/>
    <property type="match status" value="1"/>
</dbReference>
<dbReference type="FunFam" id="3.40.50.1440:FF:000002">
    <property type="entry name" value="Tubulin alpha chain"/>
    <property type="match status" value="1"/>
</dbReference>
<dbReference type="Gene3D" id="1.10.287.600">
    <property type="entry name" value="Helix hairpin bin"/>
    <property type="match status" value="1"/>
</dbReference>
<dbReference type="Gene3D" id="3.30.1330.20">
    <property type="entry name" value="Tubulin/FtsZ, C-terminal domain"/>
    <property type="match status" value="1"/>
</dbReference>
<dbReference type="Gene3D" id="3.40.50.1440">
    <property type="entry name" value="Tubulin/FtsZ, GTPase domain"/>
    <property type="match status" value="1"/>
</dbReference>
<dbReference type="InterPro" id="IPR002452">
    <property type="entry name" value="Alpha_tubulin"/>
</dbReference>
<dbReference type="InterPro" id="IPR008280">
    <property type="entry name" value="Tub_FtsZ_C"/>
</dbReference>
<dbReference type="InterPro" id="IPR000217">
    <property type="entry name" value="Tubulin"/>
</dbReference>
<dbReference type="InterPro" id="IPR037103">
    <property type="entry name" value="Tubulin/FtsZ-like_C"/>
</dbReference>
<dbReference type="InterPro" id="IPR018316">
    <property type="entry name" value="Tubulin/FtsZ_2-layer-sand-dom"/>
</dbReference>
<dbReference type="InterPro" id="IPR036525">
    <property type="entry name" value="Tubulin/FtsZ_GTPase_sf"/>
</dbReference>
<dbReference type="InterPro" id="IPR023123">
    <property type="entry name" value="Tubulin_C"/>
</dbReference>
<dbReference type="InterPro" id="IPR017975">
    <property type="entry name" value="Tubulin_CS"/>
</dbReference>
<dbReference type="InterPro" id="IPR003008">
    <property type="entry name" value="Tubulin_FtsZ_GTPase"/>
</dbReference>
<dbReference type="PANTHER" id="PTHR11588">
    <property type="entry name" value="TUBULIN"/>
    <property type="match status" value="1"/>
</dbReference>
<dbReference type="Pfam" id="PF00091">
    <property type="entry name" value="Tubulin"/>
    <property type="match status" value="1"/>
</dbReference>
<dbReference type="Pfam" id="PF03953">
    <property type="entry name" value="Tubulin_C"/>
    <property type="match status" value="1"/>
</dbReference>
<dbReference type="PRINTS" id="PR01162">
    <property type="entry name" value="ALPHATUBULIN"/>
</dbReference>
<dbReference type="PRINTS" id="PR01161">
    <property type="entry name" value="TUBULIN"/>
</dbReference>
<dbReference type="SMART" id="SM00864">
    <property type="entry name" value="Tubulin"/>
    <property type="match status" value="1"/>
</dbReference>
<dbReference type="SMART" id="SM00865">
    <property type="entry name" value="Tubulin_C"/>
    <property type="match status" value="1"/>
</dbReference>
<dbReference type="SUPFAM" id="SSF55307">
    <property type="entry name" value="Tubulin C-terminal domain-like"/>
    <property type="match status" value="1"/>
</dbReference>
<dbReference type="SUPFAM" id="SSF52490">
    <property type="entry name" value="Tubulin nucleotide-binding domain-like"/>
    <property type="match status" value="1"/>
</dbReference>
<dbReference type="PROSITE" id="PS00227">
    <property type="entry name" value="TUBULIN"/>
    <property type="match status" value="1"/>
</dbReference>
<reference key="1">
    <citation type="journal article" date="2007" name="Gene">
        <title>Mapping of chimpanzee full-length cDNAs onto the human genome unveils large potential divergence of the transcriptome.</title>
        <authorList>
            <person name="Sakate R."/>
            <person name="Suto Y."/>
            <person name="Imanishi T."/>
            <person name="Tanoue T."/>
            <person name="Hida M."/>
            <person name="Hayasaka I."/>
            <person name="Kusuda J."/>
            <person name="Gojobori T."/>
            <person name="Hashimoto K."/>
            <person name="Hirai M."/>
        </authorList>
    </citation>
    <scope>NUCLEOTIDE SEQUENCE [MRNA]</scope>
    <source>
        <tissue>Brain</tissue>
    </source>
</reference>
<accession>A5A6J1</accession>
<evidence type="ECO:0000250" key="1"/>
<evidence type="ECO:0000250" key="2">
    <source>
        <dbReference type="UniProtKB" id="P68363"/>
    </source>
</evidence>
<evidence type="ECO:0000250" key="3">
    <source>
        <dbReference type="UniProtKB" id="P68369"/>
    </source>
</evidence>
<evidence type="ECO:0000250" key="4">
    <source>
        <dbReference type="UniProtKB" id="P68373"/>
    </source>
</evidence>
<evidence type="ECO:0000250" key="5">
    <source>
        <dbReference type="UniProtKB" id="Q71U36"/>
    </source>
</evidence>
<evidence type="ECO:0000256" key="6">
    <source>
        <dbReference type="SAM" id="MobiDB-lite"/>
    </source>
</evidence>
<evidence type="ECO:0000305" key="7"/>
<organism>
    <name type="scientific">Pan troglodytes</name>
    <name type="common">Chimpanzee</name>
    <dbReference type="NCBI Taxonomy" id="9598"/>
    <lineage>
        <taxon>Eukaryota</taxon>
        <taxon>Metazoa</taxon>
        <taxon>Chordata</taxon>
        <taxon>Craniata</taxon>
        <taxon>Vertebrata</taxon>
        <taxon>Euteleostomi</taxon>
        <taxon>Mammalia</taxon>
        <taxon>Eutheria</taxon>
        <taxon>Euarchontoglires</taxon>
        <taxon>Primates</taxon>
        <taxon>Haplorrhini</taxon>
        <taxon>Catarrhini</taxon>
        <taxon>Hominidae</taxon>
        <taxon>Pan</taxon>
    </lineage>
</organism>
<gene>
    <name type="primary">TUBA1A</name>
    <name type="synonym">TUBA3</name>
</gene>
<comment type="function">
    <text evidence="2">Tubulin is the major constituent of microtubules, protein filaments consisting of alpha- and beta-tubulin heterodimers (By similarity). Microtubules grow by the addition of GTP-tubulin dimers to the microtubule end, where a stabilizing cap forms (By similarity). Below the cap, tubulin dimers are in GDP-bound state, owing to GTPase activity of alpha-tubulin (By similarity).</text>
</comment>
<comment type="catalytic activity">
    <reaction evidence="2">
        <text>GTP + H2O = GDP + phosphate + H(+)</text>
        <dbReference type="Rhea" id="RHEA:19669"/>
        <dbReference type="ChEBI" id="CHEBI:15377"/>
        <dbReference type="ChEBI" id="CHEBI:15378"/>
        <dbReference type="ChEBI" id="CHEBI:37565"/>
        <dbReference type="ChEBI" id="CHEBI:43474"/>
        <dbReference type="ChEBI" id="CHEBI:58189"/>
    </reaction>
    <physiologicalReaction direction="left-to-right" evidence="2">
        <dbReference type="Rhea" id="RHEA:19670"/>
    </physiologicalReaction>
</comment>
<comment type="cofactor">
    <cofactor evidence="2">
        <name>Mg(2+)</name>
        <dbReference type="ChEBI" id="CHEBI:18420"/>
    </cofactor>
</comment>
<comment type="subunit">
    <text evidence="2 3">Heterodimer of alpha- and beta-tubulin (By similarity). A typical microtubule is a hollow water-filled tube with an outer diameter of 25 nm and an inner diameter of 15 nM (By similarity). Alpha-beta heterodimers associate head-to-tail to form protofilaments running lengthwise along the microtubule wall with the beta-tubulin subunit facing the microtubule plus end conferring a structural polarity (By similarity). Microtubules usually have 13 protofilaments but different protofilament numbers can be found in some organisms and specialized cells (By similarity). Interacts with gamma-tubulin; the interaction allows microtubules to nucleate from the gamma-tubulin ring complex (gTuRC) (By similarity). Nascent microtubule interacts (via alpha-tubulin MREC motif) with TTC5/STRAP; this interaction may result in tubulin mRNA-targeted degradation (By similarity). Component of sperm flagellar doublet microtubules (By similarity).</text>
</comment>
<comment type="subcellular location">
    <subcellularLocation>
        <location>Cytoplasm</location>
        <location>Cytoskeleton</location>
    </subcellularLocation>
    <subcellularLocation>
        <location evidence="3">Cytoplasm</location>
        <location evidence="3">Cytoskeleton</location>
        <location evidence="3">Flagellum axoneme</location>
    </subcellularLocation>
</comment>
<comment type="PTM">
    <text evidence="3">Some glutamate residues at the C-terminus are polyglycylated, resulting in polyglycine chains on the gamma-carboxyl group. Glycylation is mainly limited to tubulin incorporated into axonemes (cilia and flagella) whereas glutamylation is prevalent in neuronal cells, centrioles, axonemes, and the mitotic spindle. Both modifications can coexist on the same protein on adjacent residues, and lowering polyglycylation levels increases polyglutamylation, and reciprocally. Cilia and flagella glycylation is required for their stability and maintenance. Flagella glycylation controls sperm motility.</text>
</comment>
<comment type="PTM">
    <text evidence="3 5">Some glutamate residues at the C-terminus are polyglutamylated, resulting in polyglutamate chains on the gamma-carboxyl group (By similarity). Polyglutamylation plays a key role in microtubule severing by spastin (SPAST). SPAST preferentially recognizes and acts on microtubules decorated with short polyglutamate tails: severing activity by SPAST increases as the number of glutamates per tubulin rises from one to eight, but decreases beyond this glutamylation threshold (By similarity). Glutamylation is also involved in cilia motility (By similarity).</text>
</comment>
<comment type="PTM">
    <text evidence="5">Acetylation of alpha chains at Lys-40 is located inside the microtubule lumen. This modification has been correlated with increased microtubule stability, intracellular transport and ciliary assembly.</text>
</comment>
<comment type="PTM">
    <text evidence="2">Methylation of alpha chains at Lys-40 is found in mitotic microtubules and is required for normal mitosis and cytokinesis contributing to genomic stability.</text>
</comment>
<comment type="PTM">
    <text evidence="5">Nitration of Tyr-451 is irreversible and interferes with normal dynein intracellular distribution.</text>
</comment>
<comment type="PTM">
    <text evidence="3 5">Undergoes a tyrosination/detyrosination cycle, the cyclic removal and re-addition of a C-terminal tyrosine residue by the enzymes tubulin tyrosine carboxypeptidase (MATCAP1, VASH1 or VASH2) and tubulin tyrosine ligase (TTL), respectively.</text>
</comment>
<comment type="PTM">
    <molecule>Tubulin alpha-1A chain</molecule>
    <text evidence="3 5">Tyrosination promotes microtubule interaction with CAP-Gly domain-containing proteins such as CLIP1, CLIP2 and DCTN1 (By similarity). Tyrosination regulates the initiation of dynein-dynactin motility via interaction with DCTN1, which brings the dynein-dynactin complex into contact with microtubules. In neurons, tyrosinated tubulins mediate the initiation of retrograde vesicle transport (By similarity).</text>
</comment>
<comment type="PTM">
    <molecule>Detyrosinated tubulin alpha-1A chain</molecule>
    <text evidence="3 5">Detyrosination is involved in metaphase plate congression by guiding chromosomes during mitosis: detyrosination promotes interaction with CENPE, promoting pole-proximal transport of chromosomes toward the equator (By similarity). Detyrosination increases microtubules-dependent mechanotransduction in dystrophic cardiac and skeletal muscle. In cardiomyocytes, detyrosinated microtubules are required to resist to contractile compression during contraction: detyrosination promotes association with desmin (DES) at force-generating sarcomeres, leading to buckled microtubules and mechanical resistance to contraction (By similarity).</text>
</comment>
<comment type="similarity">
    <text evidence="7">Belongs to the tubulin family.</text>
</comment>
<protein>
    <recommendedName>
        <fullName>Tubulin alpha-1A chain</fullName>
        <ecNumber evidence="2">3.6.5.-</ecNumber>
    </recommendedName>
    <alternativeName>
        <fullName>Alpha-tubulin 3</fullName>
    </alternativeName>
    <alternativeName>
        <fullName>Tubulin B-alpha-1</fullName>
    </alternativeName>
    <alternativeName>
        <fullName>Tubulin alpha-3 chain</fullName>
    </alternativeName>
    <component>
        <recommendedName>
            <fullName>Detyrosinated tubulin alpha-1A chain</fullName>
        </recommendedName>
    </component>
</protein>
<keyword id="KW-0007">Acetylation</keyword>
<keyword id="KW-0966">Cell projection</keyword>
<keyword id="KW-0969">Cilium</keyword>
<keyword id="KW-0963">Cytoplasm</keyword>
<keyword id="KW-0206">Cytoskeleton</keyword>
<keyword id="KW-0282">Flagellum</keyword>
<keyword id="KW-0342">GTP-binding</keyword>
<keyword id="KW-0378">Hydrolase</keyword>
<keyword id="KW-1017">Isopeptide bond</keyword>
<keyword id="KW-0460">Magnesium</keyword>
<keyword id="KW-0479">Metal-binding</keyword>
<keyword id="KW-0488">Methylation</keyword>
<keyword id="KW-0493">Microtubule</keyword>
<keyword id="KW-0944">Nitration</keyword>
<keyword id="KW-0547">Nucleotide-binding</keyword>
<keyword id="KW-0597">Phosphoprotein</keyword>
<keyword id="KW-1185">Reference proteome</keyword>
<sequence length="451" mass="50136">MRECISIHVGQAGVQIGNACWELYCLEHGIQPDGQMPSDKTIGGGDDSFNTFFSETGAGKHVPRAVFVDLEPTVIDEVRTGTYRQLFHPEQLITGKEDAANNYARGHYTIGKEIIDLVLDRIRKLADQCTGLQGFLVFHSFGGGTGSGFTSLLMERLSVDYGKKSKLEFSIYPAPQVSTAVVEPYNSILTTHTTLEHSDCAFMVDNEAIYDICRRNLDIERPTYTNLNRLIGQIVSSITASLRFDGALNVDLTEFQTNLVPYPRIHFPLATYAPVISAEKAYHEQLSVAEITNACFEPANQMVKCDPRHGKYMACCLLYRGDVVPKDVNAAIATIKTKRTIQFVDWCPTGFKVGINYQPPTVVPGGDLAKVQRAVCMLSNTTAIAEAWARLDHKFDLMYAKRAFVHWYVGEGMEEGEFSEAREDMAALEKDYEEVGVDSVEGEGEEEGEEY</sequence>
<proteinExistence type="evidence at transcript level"/>
<feature type="chain" id="PRO_0000295288" description="Tubulin alpha-1A chain">
    <location>
        <begin position="1"/>
        <end position="451"/>
    </location>
</feature>
<feature type="chain" id="PRO_0000437380" description="Detyrosinated tubulin alpha-1A chain" evidence="5">
    <location>
        <begin position="1"/>
        <end position="450"/>
    </location>
</feature>
<feature type="region of interest" description="Disordered" evidence="6">
    <location>
        <begin position="432"/>
        <end position="451"/>
    </location>
</feature>
<feature type="active site" evidence="2">
    <location>
        <position position="254"/>
    </location>
</feature>
<feature type="binding site" evidence="2">
    <location>
        <position position="10"/>
    </location>
    <ligand>
        <name>GTP</name>
        <dbReference type="ChEBI" id="CHEBI:37565"/>
    </ligand>
</feature>
<feature type="binding site" evidence="2">
    <location>
        <position position="11"/>
    </location>
    <ligand>
        <name>GTP</name>
        <dbReference type="ChEBI" id="CHEBI:37565"/>
    </ligand>
</feature>
<feature type="binding site" evidence="2">
    <location>
        <position position="12"/>
    </location>
    <ligand>
        <name>GTP</name>
        <dbReference type="ChEBI" id="CHEBI:37565"/>
    </ligand>
</feature>
<feature type="binding site" evidence="2">
    <location>
        <position position="15"/>
    </location>
    <ligand>
        <name>GTP</name>
        <dbReference type="ChEBI" id="CHEBI:37565"/>
    </ligand>
</feature>
<feature type="binding site" evidence="2">
    <location>
        <position position="71"/>
    </location>
    <ligand>
        <name>GTP</name>
        <dbReference type="ChEBI" id="CHEBI:37565"/>
    </ligand>
</feature>
<feature type="binding site" evidence="2">
    <location>
        <position position="71"/>
    </location>
    <ligand>
        <name>Mg(2+)</name>
        <dbReference type="ChEBI" id="CHEBI:18420"/>
    </ligand>
</feature>
<feature type="binding site" evidence="2">
    <location>
        <position position="99"/>
    </location>
    <ligand>
        <name>GTP</name>
        <dbReference type="ChEBI" id="CHEBI:37565"/>
    </ligand>
</feature>
<feature type="binding site" evidence="2">
    <location>
        <position position="140"/>
    </location>
    <ligand>
        <name>GTP</name>
        <dbReference type="ChEBI" id="CHEBI:37565"/>
    </ligand>
</feature>
<feature type="binding site" evidence="2">
    <location>
        <position position="143"/>
    </location>
    <ligand>
        <name>GTP</name>
        <dbReference type="ChEBI" id="CHEBI:37565"/>
    </ligand>
</feature>
<feature type="binding site" evidence="2">
    <location>
        <position position="144"/>
    </location>
    <ligand>
        <name>GTP</name>
        <dbReference type="ChEBI" id="CHEBI:37565"/>
    </ligand>
</feature>
<feature type="binding site" evidence="2">
    <location>
        <position position="145"/>
    </location>
    <ligand>
        <name>GTP</name>
        <dbReference type="ChEBI" id="CHEBI:37565"/>
    </ligand>
</feature>
<feature type="binding site" evidence="2">
    <location>
        <position position="146"/>
    </location>
    <ligand>
        <name>GTP</name>
        <dbReference type="ChEBI" id="CHEBI:37565"/>
    </ligand>
</feature>
<feature type="binding site" evidence="2">
    <location>
        <position position="179"/>
    </location>
    <ligand>
        <name>GTP</name>
        <dbReference type="ChEBI" id="CHEBI:37565"/>
    </ligand>
</feature>
<feature type="binding site" evidence="2">
    <location>
        <position position="183"/>
    </location>
    <ligand>
        <name>GTP</name>
        <dbReference type="ChEBI" id="CHEBI:37565"/>
    </ligand>
</feature>
<feature type="binding site" evidence="2">
    <location>
        <position position="206"/>
    </location>
    <ligand>
        <name>GTP</name>
        <dbReference type="ChEBI" id="CHEBI:37565"/>
    </ligand>
</feature>
<feature type="binding site" evidence="2">
    <location>
        <position position="224"/>
    </location>
    <ligand>
        <name>GTP</name>
        <dbReference type="ChEBI" id="CHEBI:37565"/>
    </ligand>
</feature>
<feature type="binding site" evidence="2">
    <location>
        <position position="228"/>
    </location>
    <ligand>
        <name>GTP</name>
        <dbReference type="ChEBI" id="CHEBI:37565"/>
    </ligand>
</feature>
<feature type="binding site" evidence="2">
    <location>
        <position position="252"/>
    </location>
    <ligand>
        <name>GTP</name>
        <dbReference type="ChEBI" id="CHEBI:37565"/>
    </ligand>
</feature>
<feature type="site" description="Involved in polymerization" evidence="1">
    <location>
        <position position="451"/>
    </location>
</feature>
<feature type="modified residue" description="N6-acetyllysine" evidence="5">
    <location>
        <position position="40"/>
    </location>
</feature>
<feature type="modified residue" description="3'-nitrotyrosine" evidence="4">
    <location>
        <position position="282"/>
    </location>
</feature>
<feature type="modified residue" description="Phosphoserine" evidence="4">
    <location>
        <position position="439"/>
    </location>
</feature>
<feature type="modified residue" description="5-glutamyl polyglutamate" evidence="5">
    <location>
        <position position="443"/>
    </location>
</feature>
<feature type="modified residue" description="5-glutamyl polyglutamate" evidence="3">
    <location>
        <position position="445"/>
    </location>
</feature>
<feature type="modified residue" description="3'-nitrotyrosine" evidence="5">
    <location>
        <position position="451"/>
    </location>
</feature>
<name>TBA1A_PANTR</name>